<sequence length="383" mass="42036">MPAATMATPGYLACRTSVATLLFFVLLRRAAILGAGGAPSPARIVDYLIGYTRVGDMDKLYSQYADRYLDVTLHGCERAVVDPLGDMRHVLASEGASGQEFTASVIWYYVFPDVCFAPVFRREYLRCIRPRKLEDCYTTSPFMWTREFYVDAFLAGSGTGIELLGLNKKLTGTYMLVVRVGTTTRTALVTVNVVGECPTTMEEVTTTLRGNCWRGRQYTTDFNGDGMYLFDTEEEHRRIVYKAYQDKLKVASPNATDAPISYPRAYTGADERLAPYTLQPVSTDDHYLPGCPWGIGCDLDQTSASGVIEIEDHDESDVRLVSYPPPTLPSPGPGGNENGAGYSDNRPDPKVVGPTVGPGAIILVVMCAPILIGLTAFTIRKYC</sequence>
<dbReference type="EMBL" id="AY372243">
    <property type="protein sequence ID" value="AAQ73754.1"/>
    <property type="molecule type" value="Genomic_DNA"/>
</dbReference>
<dbReference type="RefSeq" id="NP_944448.1">
    <property type="nucleotide sequence ID" value="NC_005264.1"/>
</dbReference>
<dbReference type="SMR" id="Q6UDF6"/>
<dbReference type="GeneID" id="2656976"/>
<dbReference type="KEGG" id="vg:2656976"/>
<dbReference type="Proteomes" id="UP000006840">
    <property type="component" value="Segment"/>
</dbReference>
<dbReference type="GO" id="GO:0016020">
    <property type="term" value="C:membrane"/>
    <property type="evidence" value="ECO:0007669"/>
    <property type="project" value="UniProtKB-KW"/>
</dbReference>
<dbReference type="GO" id="GO:0019031">
    <property type="term" value="C:viral envelope"/>
    <property type="evidence" value="ECO:0007669"/>
    <property type="project" value="UniProtKB-KW"/>
</dbReference>
<dbReference type="GO" id="GO:0055036">
    <property type="term" value="C:virion membrane"/>
    <property type="evidence" value="ECO:0007669"/>
    <property type="project" value="UniProtKB-SubCell"/>
</dbReference>
<dbReference type="GO" id="GO:0098670">
    <property type="term" value="P:entry receptor-mediated virion attachment to host cell"/>
    <property type="evidence" value="ECO:0007669"/>
    <property type="project" value="UniProtKB-KW"/>
</dbReference>
<dbReference type="GO" id="GO:0046718">
    <property type="term" value="P:symbiont entry into host cell"/>
    <property type="evidence" value="ECO:0007669"/>
    <property type="project" value="UniProtKB-KW"/>
</dbReference>
<dbReference type="Gene3D" id="2.70.230.10">
    <property type="match status" value="1"/>
</dbReference>
<dbReference type="InterPro" id="IPR002896">
    <property type="entry name" value="Herpes_glycop_dom"/>
</dbReference>
<dbReference type="InterPro" id="IPR036179">
    <property type="entry name" value="Ig-like_dom_sf"/>
</dbReference>
<dbReference type="Pfam" id="PF01537">
    <property type="entry name" value="Herpes_glycop_D"/>
    <property type="match status" value="1"/>
</dbReference>
<dbReference type="SUPFAM" id="SSF48726">
    <property type="entry name" value="Immunoglobulin"/>
    <property type="match status" value="1"/>
</dbReference>
<organismHost>
    <name type="scientific">Amazona oratrix</name>
    <name type="common">yellow-headed parrot</name>
    <dbReference type="NCBI Taxonomy" id="152276"/>
</organismHost>
<feature type="signal peptide" evidence="4">
    <location>
        <begin position="1"/>
        <end position="30"/>
    </location>
</feature>
<feature type="chain" id="PRO_0000406853" description="Envelope glycoprotein D">
    <location>
        <begin position="31"/>
        <end position="383"/>
    </location>
</feature>
<feature type="topological domain" description="Virion surface" evidence="4">
    <location>
        <begin position="31"/>
        <end position="358"/>
    </location>
</feature>
<feature type="transmembrane region" description="Helical" evidence="4">
    <location>
        <begin position="359"/>
        <end position="379"/>
    </location>
</feature>
<feature type="topological domain" description="Intravirion" evidence="4">
    <location>
        <begin position="380"/>
        <end position="383"/>
    </location>
</feature>
<feature type="region of interest" description="Profusion" evidence="2">
    <location>
        <begin position="244"/>
        <end position="311"/>
    </location>
</feature>
<feature type="region of interest" description="Disordered" evidence="5">
    <location>
        <begin position="315"/>
        <end position="349"/>
    </location>
</feature>
<feature type="compositionally biased region" description="Pro residues" evidence="5">
    <location>
        <begin position="323"/>
        <end position="332"/>
    </location>
</feature>
<feature type="disulfide bond" evidence="1">
    <location>
        <begin position="76"/>
        <end position="197"/>
    </location>
</feature>
<feature type="disulfide bond" evidence="1">
    <location>
        <begin position="115"/>
        <end position="212"/>
    </location>
</feature>
<feature type="disulfide bond" evidence="1">
    <location>
        <begin position="127"/>
        <end position="136"/>
    </location>
</feature>
<name>GD_PSHV1</name>
<proteinExistence type="inferred from homology"/>
<comment type="function">
    <text evidence="2">Envelope glycoprotein that binds to host cell entry receptors, promoting the virus entry into host cells. May trigger fusion with host membrane, by recruiting the fusion machinery composed of gB and gH/gL (By similarity).</text>
</comment>
<comment type="subcellular location">
    <subcellularLocation>
        <location evidence="2">Virion membrane</location>
        <topology evidence="2">Single-pass type I membrane protein</topology>
    </subcellularLocation>
    <text evidence="3">During virion morphogenesis, this protein probably accumulates in the endosomes and trans-Golgi where secondary envelopment occurs.</text>
</comment>
<comment type="similarity">
    <text evidence="6">Belongs to the herpesviridae glycoprotein D family.</text>
</comment>
<keyword id="KW-1015">Disulfide bond</keyword>
<keyword id="KW-0325">Glycoprotein</keyword>
<keyword id="KW-0945">Host-virus interaction</keyword>
<keyword id="KW-0472">Membrane</keyword>
<keyword id="KW-1185">Reference proteome</keyword>
<keyword id="KW-0732">Signal</keyword>
<keyword id="KW-0812">Transmembrane</keyword>
<keyword id="KW-1133">Transmembrane helix</keyword>
<keyword id="KW-1161">Viral attachment to host cell</keyword>
<keyword id="KW-1234">Viral attachment to host entry receptor</keyword>
<keyword id="KW-0261">Viral envelope protein</keyword>
<keyword id="KW-0946">Virion</keyword>
<keyword id="KW-1160">Virus entry into host cell</keyword>
<reference key="1">
    <citation type="journal article" date="2006" name="J. Virol.">
        <title>Psittacid herpesvirus 1 and infectious laryngotracheitis virus: Comparative genome sequence analysis of two avian alphaherpesviruses.</title>
        <authorList>
            <person name="Thureen D.R."/>
            <person name="Keeler C.L. Jr."/>
        </authorList>
    </citation>
    <scope>NUCLEOTIDE SEQUENCE [LARGE SCALE GENOMIC DNA]</scope>
    <source>
        <strain>97-0001</strain>
    </source>
</reference>
<accession>Q6UDF6</accession>
<gene>
    <name type="primary">US6</name>
</gene>
<evidence type="ECO:0000250" key="1">
    <source>
        <dbReference type="UniProtKB" id="P57083"/>
    </source>
</evidence>
<evidence type="ECO:0000250" key="2">
    <source>
        <dbReference type="UniProtKB" id="Q05059"/>
    </source>
</evidence>
<evidence type="ECO:0000250" key="3">
    <source>
        <dbReference type="UniProtKB" id="Q69091"/>
    </source>
</evidence>
<evidence type="ECO:0000255" key="4"/>
<evidence type="ECO:0000256" key="5">
    <source>
        <dbReference type="SAM" id="MobiDB-lite"/>
    </source>
</evidence>
<evidence type="ECO:0000305" key="6"/>
<organism>
    <name type="scientific">Psittacid herpesvirus 1 (isolate Amazon parrot/-/97-0001/1997)</name>
    <name type="common">PsHV-1</name>
    <name type="synonym">Pacheco's disease virus</name>
    <dbReference type="NCBI Taxonomy" id="670426"/>
    <lineage>
        <taxon>Viruses</taxon>
        <taxon>Duplodnaviria</taxon>
        <taxon>Heunggongvirae</taxon>
        <taxon>Peploviricota</taxon>
        <taxon>Herviviricetes</taxon>
        <taxon>Herpesvirales</taxon>
        <taxon>Orthoherpesviridae</taxon>
        <taxon>Alphaherpesvirinae</taxon>
        <taxon>Iltovirus</taxon>
        <taxon>Iltovirus psittacidalpha1</taxon>
        <taxon>Psittacid alphaherpesvirus 1</taxon>
    </lineage>
</organism>
<protein>
    <recommendedName>
        <fullName>Envelope glycoprotein D</fullName>
        <shortName>gD</shortName>
    </recommendedName>
</protein>